<accession>Q3K933</accession>
<gene>
    <name evidence="1" type="primary">htpX</name>
    <name type="ordered locus">Pfl01_3984</name>
</gene>
<feature type="chain" id="PRO_1000020916" description="Protease HtpX">
    <location>
        <begin position="1"/>
        <end position="295"/>
    </location>
</feature>
<feature type="transmembrane region" description="Helical" evidence="1">
    <location>
        <begin position="4"/>
        <end position="24"/>
    </location>
</feature>
<feature type="transmembrane region" description="Helical" evidence="1">
    <location>
        <begin position="41"/>
        <end position="61"/>
    </location>
</feature>
<feature type="transmembrane region" description="Helical" evidence="1">
    <location>
        <begin position="158"/>
        <end position="178"/>
    </location>
</feature>
<feature type="transmembrane region" description="Helical" evidence="1">
    <location>
        <begin position="199"/>
        <end position="219"/>
    </location>
</feature>
<feature type="active site" evidence="1">
    <location>
        <position position="148"/>
    </location>
</feature>
<feature type="binding site" evidence="1">
    <location>
        <position position="147"/>
    </location>
    <ligand>
        <name>Zn(2+)</name>
        <dbReference type="ChEBI" id="CHEBI:29105"/>
        <note>catalytic</note>
    </ligand>
</feature>
<feature type="binding site" evidence="1">
    <location>
        <position position="151"/>
    </location>
    <ligand>
        <name>Zn(2+)</name>
        <dbReference type="ChEBI" id="CHEBI:29105"/>
        <note>catalytic</note>
    </ligand>
</feature>
<feature type="binding site" evidence="1">
    <location>
        <position position="224"/>
    </location>
    <ligand>
        <name>Zn(2+)</name>
        <dbReference type="ChEBI" id="CHEBI:29105"/>
        <note>catalytic</note>
    </ligand>
</feature>
<name>HTPX_PSEPF</name>
<reference key="1">
    <citation type="journal article" date="2009" name="Genome Biol.">
        <title>Genomic and genetic analyses of diversity and plant interactions of Pseudomonas fluorescens.</title>
        <authorList>
            <person name="Silby M.W."/>
            <person name="Cerdeno-Tarraga A.M."/>
            <person name="Vernikos G.S."/>
            <person name="Giddens S.R."/>
            <person name="Jackson R.W."/>
            <person name="Preston G.M."/>
            <person name="Zhang X.-X."/>
            <person name="Moon C.D."/>
            <person name="Gehrig S.M."/>
            <person name="Godfrey S.A.C."/>
            <person name="Knight C.G."/>
            <person name="Malone J.G."/>
            <person name="Robinson Z."/>
            <person name="Spiers A.J."/>
            <person name="Harris S."/>
            <person name="Challis G.L."/>
            <person name="Yaxley A.M."/>
            <person name="Harris D."/>
            <person name="Seeger K."/>
            <person name="Murphy L."/>
            <person name="Rutter S."/>
            <person name="Squares R."/>
            <person name="Quail M.A."/>
            <person name="Saunders E."/>
            <person name="Mavromatis K."/>
            <person name="Brettin T.S."/>
            <person name="Bentley S.D."/>
            <person name="Hothersall J."/>
            <person name="Stephens E."/>
            <person name="Thomas C.M."/>
            <person name="Parkhill J."/>
            <person name="Levy S.B."/>
            <person name="Rainey P.B."/>
            <person name="Thomson N.R."/>
        </authorList>
    </citation>
    <scope>NUCLEOTIDE SEQUENCE [LARGE SCALE GENOMIC DNA]</scope>
    <source>
        <strain>Pf0-1</strain>
    </source>
</reference>
<keyword id="KW-0997">Cell inner membrane</keyword>
<keyword id="KW-1003">Cell membrane</keyword>
<keyword id="KW-0378">Hydrolase</keyword>
<keyword id="KW-0472">Membrane</keyword>
<keyword id="KW-0479">Metal-binding</keyword>
<keyword id="KW-0482">Metalloprotease</keyword>
<keyword id="KW-0645">Protease</keyword>
<keyword id="KW-0812">Transmembrane</keyword>
<keyword id="KW-1133">Transmembrane helix</keyword>
<keyword id="KW-0862">Zinc</keyword>
<evidence type="ECO:0000255" key="1">
    <source>
        <dbReference type="HAMAP-Rule" id="MF_00188"/>
    </source>
</evidence>
<dbReference type="EC" id="3.4.24.-" evidence="1"/>
<dbReference type="EMBL" id="CP000094">
    <property type="protein sequence ID" value="ABA75721.1"/>
    <property type="molecule type" value="Genomic_DNA"/>
</dbReference>
<dbReference type="RefSeq" id="WP_011335292.1">
    <property type="nucleotide sequence ID" value="NC_007492.2"/>
</dbReference>
<dbReference type="SMR" id="Q3K933"/>
<dbReference type="MEROPS" id="M48.002"/>
<dbReference type="KEGG" id="pfo:Pfl01_3984"/>
<dbReference type="eggNOG" id="COG0501">
    <property type="taxonomic scope" value="Bacteria"/>
</dbReference>
<dbReference type="HOGENOM" id="CLU_042266_1_0_6"/>
<dbReference type="Proteomes" id="UP000002704">
    <property type="component" value="Chromosome"/>
</dbReference>
<dbReference type="GO" id="GO:0005886">
    <property type="term" value="C:plasma membrane"/>
    <property type="evidence" value="ECO:0007669"/>
    <property type="project" value="UniProtKB-SubCell"/>
</dbReference>
<dbReference type="GO" id="GO:0004222">
    <property type="term" value="F:metalloendopeptidase activity"/>
    <property type="evidence" value="ECO:0007669"/>
    <property type="project" value="UniProtKB-UniRule"/>
</dbReference>
<dbReference type="GO" id="GO:0008270">
    <property type="term" value="F:zinc ion binding"/>
    <property type="evidence" value="ECO:0007669"/>
    <property type="project" value="UniProtKB-UniRule"/>
</dbReference>
<dbReference type="GO" id="GO:0006508">
    <property type="term" value="P:proteolysis"/>
    <property type="evidence" value="ECO:0007669"/>
    <property type="project" value="UniProtKB-KW"/>
</dbReference>
<dbReference type="CDD" id="cd07335">
    <property type="entry name" value="M48B_HtpX_like"/>
    <property type="match status" value="1"/>
</dbReference>
<dbReference type="Gene3D" id="3.30.2010.10">
    <property type="entry name" value="Metalloproteases ('zincins'), catalytic domain"/>
    <property type="match status" value="1"/>
</dbReference>
<dbReference type="HAMAP" id="MF_00188">
    <property type="entry name" value="Pept_M48_protease_HtpX"/>
    <property type="match status" value="1"/>
</dbReference>
<dbReference type="InterPro" id="IPR050083">
    <property type="entry name" value="HtpX_protease"/>
</dbReference>
<dbReference type="InterPro" id="IPR022919">
    <property type="entry name" value="Pept_M48_protease_HtpX"/>
</dbReference>
<dbReference type="InterPro" id="IPR001915">
    <property type="entry name" value="Peptidase_M48"/>
</dbReference>
<dbReference type="NCBIfam" id="NF003965">
    <property type="entry name" value="PRK05457.1"/>
    <property type="match status" value="1"/>
</dbReference>
<dbReference type="PANTHER" id="PTHR43221">
    <property type="entry name" value="PROTEASE HTPX"/>
    <property type="match status" value="1"/>
</dbReference>
<dbReference type="PANTHER" id="PTHR43221:SF1">
    <property type="entry name" value="PROTEASE HTPX"/>
    <property type="match status" value="1"/>
</dbReference>
<dbReference type="Pfam" id="PF01435">
    <property type="entry name" value="Peptidase_M48"/>
    <property type="match status" value="1"/>
</dbReference>
<organism>
    <name type="scientific">Pseudomonas fluorescens (strain Pf0-1)</name>
    <dbReference type="NCBI Taxonomy" id="205922"/>
    <lineage>
        <taxon>Bacteria</taxon>
        <taxon>Pseudomonadati</taxon>
        <taxon>Pseudomonadota</taxon>
        <taxon>Gammaproteobacteria</taxon>
        <taxon>Pseudomonadales</taxon>
        <taxon>Pseudomonadaceae</taxon>
        <taxon>Pseudomonas</taxon>
    </lineage>
</organism>
<proteinExistence type="inferred from homology"/>
<sequence length="295" mass="32554">MMRILLFLATNLAVVLIASITLSLFGFNGFMAANGVDLNLSQLLVFCAVFGFAGSLFSLFISKWMAKMSTGTQIITQPRTRHEQWLLQTVEQLSREAGIKMPEVGIFPAYEANAFATGWNKNDALVAVSQGLLERFKEDEVRAVLAHEIGHVANGDMVTLALIQGVVNTFVMFFARIIGNFVDKVIFKNEEGQGMAYYIATIFAELVLGILASAIVMWFSRKREFRADDAGARLAGTGAMINALQRLRAEQGLPVHMPDTLNAFGINGGIKQGFARMFMSHPPLEERIDALRRRG</sequence>
<protein>
    <recommendedName>
        <fullName evidence="1">Protease HtpX</fullName>
        <ecNumber evidence="1">3.4.24.-</ecNumber>
    </recommendedName>
    <alternativeName>
        <fullName evidence="1">Heat shock protein HtpX</fullName>
    </alternativeName>
</protein>
<comment type="cofactor">
    <cofactor evidence="1">
        <name>Zn(2+)</name>
        <dbReference type="ChEBI" id="CHEBI:29105"/>
    </cofactor>
    <text evidence="1">Binds 1 zinc ion per subunit.</text>
</comment>
<comment type="subcellular location">
    <subcellularLocation>
        <location evidence="1">Cell inner membrane</location>
        <topology evidence="1">Multi-pass membrane protein</topology>
    </subcellularLocation>
</comment>
<comment type="similarity">
    <text evidence="1">Belongs to the peptidase M48B family.</text>
</comment>